<sequence>MKIEPIAFESLGVRSQATLVETKDVRILIDPAVSLAPRRYGLPPHRIEVDTLVELAKKITEKAREADVLIVTHYHYDHHDPGYVVPKEIYRDKVVLVKNPESYINPSQGKVRAPKFLRAIKGLPKEISYADGKEYRFGNTRILVSHPVPHGADVRLGYVIQVFIKDGDSSVLFTSDVEGVPSEEHVKFTLDTKPNFLVIDGPLSYLVGRALTEDQLQVSVKNMERLAKSGLETMVVDHHVLRDLKYREVLSGLYDVAKSSGVKVTTAAEILGRETLQLEAKRRELFAQDNSPAKIPRNLASLLRIDQEG</sequence>
<accession>A4YEA7</accession>
<feature type="chain" id="PRO_1000087383" description="UPF0282 protein Msed_0584">
    <location>
        <begin position="1"/>
        <end position="309"/>
    </location>
</feature>
<comment type="similarity">
    <text evidence="1">Belongs to the UPF0282 family.</text>
</comment>
<keyword id="KW-1185">Reference proteome</keyword>
<protein>
    <recommendedName>
        <fullName evidence="1">UPF0282 protein Msed_0584</fullName>
    </recommendedName>
</protein>
<name>Y584_METS5</name>
<organism>
    <name type="scientific">Metallosphaera sedula (strain ATCC 51363 / DSM 5348 / JCM 9185 / NBRC 15509 / TH2)</name>
    <dbReference type="NCBI Taxonomy" id="399549"/>
    <lineage>
        <taxon>Archaea</taxon>
        <taxon>Thermoproteota</taxon>
        <taxon>Thermoprotei</taxon>
        <taxon>Sulfolobales</taxon>
        <taxon>Sulfolobaceae</taxon>
        <taxon>Metallosphaera</taxon>
    </lineage>
</organism>
<evidence type="ECO:0000255" key="1">
    <source>
        <dbReference type="HAMAP-Rule" id="MF_01406"/>
    </source>
</evidence>
<dbReference type="EMBL" id="CP000682">
    <property type="protein sequence ID" value="ABP94759.1"/>
    <property type="molecule type" value="Genomic_DNA"/>
</dbReference>
<dbReference type="RefSeq" id="WP_012020546.1">
    <property type="nucleotide sequence ID" value="NC_009440.1"/>
</dbReference>
<dbReference type="STRING" id="399549.Msed_0584"/>
<dbReference type="GeneID" id="91755034"/>
<dbReference type="KEGG" id="mse:Msed_0584"/>
<dbReference type="eggNOG" id="arCOG00969">
    <property type="taxonomic scope" value="Archaea"/>
</dbReference>
<dbReference type="HOGENOM" id="CLU_079268_0_0_2"/>
<dbReference type="Proteomes" id="UP000000242">
    <property type="component" value="Chromosome"/>
</dbReference>
<dbReference type="Gene3D" id="3.60.15.10">
    <property type="entry name" value="Ribonuclease Z/Hydroxyacylglutathione hydrolase-like"/>
    <property type="match status" value="1"/>
</dbReference>
<dbReference type="HAMAP" id="MF_01406">
    <property type="entry name" value="UPF0282"/>
    <property type="match status" value="1"/>
</dbReference>
<dbReference type="InterPro" id="IPR001279">
    <property type="entry name" value="Metallo-B-lactamas"/>
</dbReference>
<dbReference type="InterPro" id="IPR036866">
    <property type="entry name" value="RibonucZ/Hydroxyglut_hydro"/>
</dbReference>
<dbReference type="InterPro" id="IPR050114">
    <property type="entry name" value="UPF0173_UPF0282_UlaG_hydrolase"/>
</dbReference>
<dbReference type="InterPro" id="IPR014426">
    <property type="entry name" value="UPF0282_hydrls"/>
</dbReference>
<dbReference type="NCBIfam" id="NF003287">
    <property type="entry name" value="PRK04286.1-1"/>
    <property type="match status" value="1"/>
</dbReference>
<dbReference type="PANTHER" id="PTHR43546">
    <property type="entry name" value="UPF0173 METAL-DEPENDENT HYDROLASE MJ1163-RELATED"/>
    <property type="match status" value="1"/>
</dbReference>
<dbReference type="PANTHER" id="PTHR43546:SF4">
    <property type="entry name" value="UPF0282 PROTEIN MJ1629"/>
    <property type="match status" value="1"/>
</dbReference>
<dbReference type="Pfam" id="PF00753">
    <property type="entry name" value="Lactamase_B"/>
    <property type="match status" value="1"/>
</dbReference>
<dbReference type="PIRSF" id="PIRSF004944">
    <property type="entry name" value="UCP004944_hydrls"/>
    <property type="match status" value="1"/>
</dbReference>
<dbReference type="SMART" id="SM00849">
    <property type="entry name" value="Lactamase_B"/>
    <property type="match status" value="1"/>
</dbReference>
<dbReference type="SUPFAM" id="SSF56281">
    <property type="entry name" value="Metallo-hydrolase/oxidoreductase"/>
    <property type="match status" value="1"/>
</dbReference>
<gene>
    <name type="ordered locus">Msed_0584</name>
</gene>
<reference key="1">
    <citation type="journal article" date="2008" name="Appl. Environ. Microbiol.">
        <title>The genome sequence of the metal-mobilizing, extremely thermoacidophilic archaeon Metallosphaera sedula provides insights into bioleaching-associated metabolism.</title>
        <authorList>
            <person name="Auernik K.S."/>
            <person name="Maezato Y."/>
            <person name="Blum P.H."/>
            <person name="Kelly R.M."/>
        </authorList>
    </citation>
    <scope>NUCLEOTIDE SEQUENCE [LARGE SCALE GENOMIC DNA]</scope>
    <source>
        <strain>ATCC 51363 / DSM 5348 / JCM 9185 / NBRC 15509 / TH2</strain>
    </source>
</reference>
<proteinExistence type="inferred from homology"/>